<keyword id="KW-0002">3D-structure</keyword>
<keyword id="KW-0025">Alternative splicing</keyword>
<keyword id="KW-0067">ATP-binding</keyword>
<keyword id="KW-0173">Coenzyme A biosynthesis</keyword>
<keyword id="KW-0963">Cytoplasm</keyword>
<keyword id="KW-0968">Cytoplasmic vesicle</keyword>
<keyword id="KW-0967">Endosome</keyword>
<keyword id="KW-0418">Kinase</keyword>
<keyword id="KW-0547">Nucleotide-binding</keyword>
<keyword id="KW-0539">Nucleus</keyword>
<keyword id="KW-0597">Phosphoprotein</keyword>
<keyword id="KW-1267">Proteomics identification</keyword>
<keyword id="KW-1185">Reference proteome</keyword>
<keyword id="KW-0808">Transferase</keyword>
<evidence type="ECO:0000250" key="1">
    <source>
        <dbReference type="UniProtKB" id="Q8K4K6"/>
    </source>
</evidence>
<evidence type="ECO:0000250" key="2">
    <source>
        <dbReference type="UniProtKB" id="Q9H999"/>
    </source>
</evidence>
<evidence type="ECO:0000256" key="3">
    <source>
        <dbReference type="SAM" id="MobiDB-lite"/>
    </source>
</evidence>
<evidence type="ECO:0000269" key="4">
    <source>
    </source>
</evidence>
<evidence type="ECO:0000269" key="5">
    <source>
    </source>
</evidence>
<evidence type="ECO:0000269" key="6">
    <source>
    </source>
</evidence>
<evidence type="ECO:0000269" key="7">
    <source>
    </source>
</evidence>
<evidence type="ECO:0000303" key="8">
    <source>
    </source>
</evidence>
<evidence type="ECO:0000303" key="9">
    <source>
    </source>
</evidence>
<evidence type="ECO:0000303" key="10">
    <source>
    </source>
</evidence>
<evidence type="ECO:0000305" key="11"/>
<evidence type="ECO:0007744" key="12">
    <source>
    </source>
</evidence>
<evidence type="ECO:0007829" key="13">
    <source>
        <dbReference type="PDB" id="2I7N"/>
    </source>
</evidence>
<evidence type="ECO:0007829" key="14">
    <source>
        <dbReference type="PDB" id="3SMP"/>
    </source>
</evidence>
<organism>
    <name type="scientific">Homo sapiens</name>
    <name type="common">Human</name>
    <dbReference type="NCBI Taxonomy" id="9606"/>
    <lineage>
        <taxon>Eukaryota</taxon>
        <taxon>Metazoa</taxon>
        <taxon>Chordata</taxon>
        <taxon>Craniata</taxon>
        <taxon>Vertebrata</taxon>
        <taxon>Euteleostomi</taxon>
        <taxon>Mammalia</taxon>
        <taxon>Eutheria</taxon>
        <taxon>Euarchontoglires</taxon>
        <taxon>Primates</taxon>
        <taxon>Haplorrhini</taxon>
        <taxon>Catarrhini</taxon>
        <taxon>Hominidae</taxon>
        <taxon>Homo</taxon>
    </lineage>
</organism>
<sequence>MLKLVGGGGGQDWACSVAGTSLGGEEAAFEVARPGDQGKAGGGSPGWGCAGIPDSAPGAGVLQAGAVGPARGGQGAEEVGESAGGGEERRVRHPQAPALRLLNRKPQGGSGEIKTPENDLQRGRLSRGPRTAPPAPGMGDRSGQQERSVPHSPGAPVGTSAAAVNGLLHNGFHPPPVQPPHVCSRGPVGGSDAAPQRLPLLPELQPQPLLPQHDSPAKKCRLRRRMDSGRKNRPPFPWFGMDIGGTLVKLVYFEPKDITAEEEQEEVENLKSIRKYLTSNTAYGKTGIRDVHLELKNLTMCGRKGNLHFIRFPSCAMHRFIQMGSEKNFSSLHTTLCATGGGAFKFEEDFRMIADLQLHKLDELDCLIQGLLYVDSVGFNGKPECYYFENPTNPELCQKKPYCLDNPYPMLLVNMGSGVSILAVYSKDNYKRVTGTSLGGGTFLGLCCLLTGCETFEEALEMAAKGDSTNVDKLVKDIYGGDYERFGLQGSAVASSFGNMMSKEKRDSISKEDLARATLVTITNNIGSIARMCALNENIDRVVFVGNFLRINMVSMKLLAYAMDFWSKGQLKALFLEHEGYFGAVGALLELFKMTDDK</sequence>
<feature type="chain" id="PRO_0000161802" description="Pantothenate kinase 1">
    <location>
        <begin position="1"/>
        <end position="598"/>
    </location>
</feature>
<feature type="region of interest" description="Disordered" evidence="3">
    <location>
        <begin position="32"/>
        <end position="161"/>
    </location>
</feature>
<feature type="short sequence motif" description="Nucleolar localization signal" evidence="7">
    <location>
        <begin position="218"/>
        <end position="235"/>
    </location>
</feature>
<feature type="compositionally biased region" description="Gly residues" evidence="3">
    <location>
        <begin position="38"/>
        <end position="49"/>
    </location>
</feature>
<feature type="active site" description="Proton acceptor" evidence="2">
    <location>
        <position position="363"/>
    </location>
</feature>
<feature type="binding site" evidence="6">
    <location>
        <position position="417"/>
    </location>
    <ligand>
        <name>acetyl-CoA</name>
        <dbReference type="ChEBI" id="CHEBI:57288"/>
    </ligand>
</feature>
<feature type="binding site" evidence="6">
    <location>
        <position position="420"/>
    </location>
    <ligand>
        <name>acetyl-CoA</name>
        <dbReference type="ChEBI" id="CHEBI:57288"/>
    </ligand>
</feature>
<feature type="binding site" evidence="6">
    <location>
        <position position="432"/>
    </location>
    <ligand>
        <name>acetyl-CoA</name>
        <dbReference type="ChEBI" id="CHEBI:57288"/>
    </ligand>
</feature>
<feature type="modified residue" description="Phosphoserine" evidence="12">
    <location>
        <position position="215"/>
    </location>
</feature>
<feature type="splice variant" id="VSP_004520" description="In isoform 2 and isoform 3." evidence="8 9 10">
    <original>MLKLVGGGGGQDWACSVAGTSLGGEEAAFEVARPGDQGKAGGGSPGWGCAGIPDSAPGAGVLQAGAVGPARGGQGAEEVGESAGGGEERRVRHPQAPALRLLNRKPQGGSGEIKTPENDLQRGRLSRGPRTAPPAPGMGDRSGQQERSVPHSPGAPVGTSAAAVNGLLHNGFHPPPVQPPHVCSRGPVGGSDAAPQRLPLLPELQPQPLLPQHDSPAKKCRLRRRMDSGRKNRPP</original>
    <variation>MKLINGKKQT</variation>
    <location>
        <begin position="1"/>
        <end position="235"/>
    </location>
</feature>
<feature type="splice variant" id="VSP_012823" description="In isoform 4." evidence="9">
    <location>
        <begin position="1"/>
        <end position="198"/>
    </location>
</feature>
<feature type="splice variant" id="VSP_012824" description="In isoform 4." evidence="9">
    <original>PLLPELQPQPLLPQHDSPAKKCRLRRRMDSGRKNRPP</original>
    <variation>MAKSKHALLPFCHGMMQQEGLHQMQSLDLGLLSLQNS</variation>
    <location>
        <begin position="199"/>
        <end position="235"/>
    </location>
</feature>
<feature type="splice variant" id="VSP_004521" description="In isoform 3." evidence="8">
    <location>
        <begin position="438"/>
        <end position="496"/>
    </location>
</feature>
<feature type="mutagenesis site" description="Loss of nuclear localization." evidence="7">
    <original>KKCRLRRRMDSGRKNR</original>
    <variation>AACALAAAMDSGAANA</variation>
    <location>
        <begin position="218"/>
        <end position="233"/>
    </location>
</feature>
<feature type="sequence conflict" description="In Ref. 1; AAL86371." evidence="11" ref="1">
    <original>N</original>
    <variation>D</variation>
    <location>
        <position position="306"/>
    </location>
</feature>
<feature type="strand" evidence="13">
    <location>
        <begin position="238"/>
        <end position="243"/>
    </location>
</feature>
<feature type="strand" evidence="13">
    <location>
        <begin position="245"/>
        <end position="255"/>
    </location>
</feature>
<feature type="helix" evidence="14">
    <location>
        <begin position="260"/>
        <end position="265"/>
    </location>
</feature>
<feature type="helix" evidence="13">
    <location>
        <begin position="273"/>
        <end position="279"/>
    </location>
</feature>
<feature type="strand" evidence="14">
    <location>
        <begin position="281"/>
        <end position="283"/>
    </location>
</feature>
<feature type="strand" evidence="13">
    <location>
        <begin position="284"/>
        <end position="286"/>
    </location>
</feature>
<feature type="strand" evidence="14">
    <location>
        <begin position="287"/>
        <end position="289"/>
    </location>
</feature>
<feature type="helix" evidence="13">
    <location>
        <begin position="291"/>
        <end position="293"/>
    </location>
</feature>
<feature type="strand" evidence="13">
    <location>
        <begin position="295"/>
        <end position="299"/>
    </location>
</feature>
<feature type="strand" evidence="13">
    <location>
        <begin position="304"/>
        <end position="313"/>
    </location>
</feature>
<feature type="helix" evidence="13">
    <location>
        <begin position="314"/>
        <end position="316"/>
    </location>
</feature>
<feature type="helix" evidence="13">
    <location>
        <begin position="317"/>
        <end position="323"/>
    </location>
</feature>
<feature type="helix" evidence="14">
    <location>
        <begin position="329"/>
        <end position="331"/>
    </location>
</feature>
<feature type="strand" evidence="13">
    <location>
        <begin position="338"/>
        <end position="340"/>
    </location>
</feature>
<feature type="turn" evidence="13">
    <location>
        <begin position="341"/>
        <end position="344"/>
    </location>
</feature>
<feature type="helix" evidence="13">
    <location>
        <begin position="345"/>
        <end position="347"/>
    </location>
</feature>
<feature type="strand" evidence="14">
    <location>
        <begin position="357"/>
        <end position="360"/>
    </location>
</feature>
<feature type="helix" evidence="13">
    <location>
        <begin position="363"/>
        <end position="377"/>
    </location>
</feature>
<feature type="strand" evidence="13">
    <location>
        <begin position="384"/>
        <end position="390"/>
    </location>
</feature>
<feature type="turn" evidence="13">
    <location>
        <begin position="394"/>
        <end position="396"/>
    </location>
</feature>
<feature type="strand" evidence="13">
    <location>
        <begin position="398"/>
        <end position="402"/>
    </location>
</feature>
<feature type="strand" evidence="13">
    <location>
        <begin position="409"/>
        <end position="426"/>
    </location>
</feature>
<feature type="strand" evidence="13">
    <location>
        <begin position="429"/>
        <end position="437"/>
    </location>
</feature>
<feature type="helix" evidence="13">
    <location>
        <begin position="440"/>
        <end position="451"/>
    </location>
</feature>
<feature type="helix" evidence="13">
    <location>
        <begin position="456"/>
        <end position="465"/>
    </location>
</feature>
<feature type="helix" evidence="13">
    <location>
        <begin position="468"/>
        <end position="470"/>
    </location>
</feature>
<feature type="strand" evidence="13">
    <location>
        <begin position="472"/>
        <end position="474"/>
    </location>
</feature>
<feature type="helix" evidence="13">
    <location>
        <begin position="475"/>
        <end position="479"/>
    </location>
</feature>
<feature type="helix" evidence="13">
    <location>
        <begin position="484"/>
        <end position="486"/>
    </location>
</feature>
<feature type="strand" evidence="13">
    <location>
        <begin position="492"/>
        <end position="495"/>
    </location>
</feature>
<feature type="turn" evidence="13">
    <location>
        <begin position="496"/>
        <end position="501"/>
    </location>
</feature>
<feature type="helix" evidence="13">
    <location>
        <begin position="503"/>
        <end position="506"/>
    </location>
</feature>
<feature type="helix" evidence="13">
    <location>
        <begin position="511"/>
        <end position="537"/>
    </location>
</feature>
<feature type="strand" evidence="13">
    <location>
        <begin position="542"/>
        <end position="546"/>
    </location>
</feature>
<feature type="helix" evidence="13">
    <location>
        <begin position="547"/>
        <end position="549"/>
    </location>
</feature>
<feature type="strand" evidence="13">
    <location>
        <begin position="551"/>
        <end position="553"/>
    </location>
</feature>
<feature type="helix" evidence="13">
    <location>
        <begin position="554"/>
        <end position="566"/>
    </location>
</feature>
<feature type="turn" evidence="13">
    <location>
        <begin position="567"/>
        <end position="569"/>
    </location>
</feature>
<feature type="strand" evidence="13">
    <location>
        <begin position="573"/>
        <end position="576"/>
    </location>
</feature>
<feature type="turn" evidence="13">
    <location>
        <begin position="577"/>
        <end position="580"/>
    </location>
</feature>
<feature type="helix" evidence="13">
    <location>
        <begin position="582"/>
        <end position="591"/>
    </location>
</feature>
<reference key="1">
    <citation type="journal article" date="2002" name="Int. J. Biochem. Cell Biol.">
        <title>Cloning and characterization of a novel human pantothenate kinase gene.</title>
        <authorList>
            <person name="Ni X."/>
            <person name="Ma Y."/>
            <person name="Cheng H."/>
            <person name="Jiang M."/>
            <person name="Ying K."/>
            <person name="Xie Y."/>
            <person name="Mao Y."/>
        </authorList>
    </citation>
    <scope>NUCLEOTIDE SEQUENCE [MRNA] (ISOFORM 3)</scope>
    <scope>TISSUE SPECIFICITY (ISOFORM 3)</scope>
    <source>
        <tissue>Fetal brain</tissue>
    </source>
</reference>
<reference key="2">
    <citation type="journal article" date="2004" name="J. Lipid Res.">
        <title>PPARalpha controls the intracellular coenzyme A concentration via regulation of PANK1alpha gene expression.</title>
        <authorList>
            <person name="Ramaswamy G."/>
            <person name="Karim M.A."/>
            <person name="Murti K.G."/>
            <person name="Jackowski S."/>
        </authorList>
    </citation>
    <scope>NUCLEOTIDE SEQUENCE [MRNA] (ISOFORMS 1; 2 AND 4)</scope>
    <scope>SUBCELLULAR LOCATION</scope>
    <scope>TISSUE SPECIFICITY</scope>
    <scope>INDUCTION</scope>
    <scope>FUNCTION (ISOFORM 1)</scope>
    <scope>CATALYTIC ACTIVITY (ISOFORM 1)</scope>
</reference>
<reference key="3">
    <citation type="journal article" date="2004" name="Nature">
        <title>The DNA sequence and comparative analysis of human chromosome 10.</title>
        <authorList>
            <person name="Deloukas P."/>
            <person name="Earthrowl M.E."/>
            <person name="Grafham D.V."/>
            <person name="Rubenfield M."/>
            <person name="French L."/>
            <person name="Steward C.A."/>
            <person name="Sims S.K."/>
            <person name="Jones M.C."/>
            <person name="Searle S."/>
            <person name="Scott C."/>
            <person name="Howe K."/>
            <person name="Hunt S.E."/>
            <person name="Andrews T.D."/>
            <person name="Gilbert J.G.R."/>
            <person name="Swarbreck D."/>
            <person name="Ashurst J.L."/>
            <person name="Taylor A."/>
            <person name="Battles J."/>
            <person name="Bird C.P."/>
            <person name="Ainscough R."/>
            <person name="Almeida J.P."/>
            <person name="Ashwell R.I.S."/>
            <person name="Ambrose K.D."/>
            <person name="Babbage A.K."/>
            <person name="Bagguley C.L."/>
            <person name="Bailey J."/>
            <person name="Banerjee R."/>
            <person name="Bates K."/>
            <person name="Beasley H."/>
            <person name="Bray-Allen S."/>
            <person name="Brown A.J."/>
            <person name="Brown J.Y."/>
            <person name="Burford D.C."/>
            <person name="Burrill W."/>
            <person name="Burton J."/>
            <person name="Cahill P."/>
            <person name="Camire D."/>
            <person name="Carter N.P."/>
            <person name="Chapman J.C."/>
            <person name="Clark S.Y."/>
            <person name="Clarke G."/>
            <person name="Clee C.M."/>
            <person name="Clegg S."/>
            <person name="Corby N."/>
            <person name="Coulson A."/>
            <person name="Dhami P."/>
            <person name="Dutta I."/>
            <person name="Dunn M."/>
            <person name="Faulkner L."/>
            <person name="Frankish A."/>
            <person name="Frankland J.A."/>
            <person name="Garner P."/>
            <person name="Garnett J."/>
            <person name="Gribble S."/>
            <person name="Griffiths C."/>
            <person name="Grocock R."/>
            <person name="Gustafson E."/>
            <person name="Hammond S."/>
            <person name="Harley J.L."/>
            <person name="Hart E."/>
            <person name="Heath P.D."/>
            <person name="Ho T.P."/>
            <person name="Hopkins B."/>
            <person name="Horne J."/>
            <person name="Howden P.J."/>
            <person name="Huckle E."/>
            <person name="Hynds C."/>
            <person name="Johnson C."/>
            <person name="Johnson D."/>
            <person name="Kana A."/>
            <person name="Kay M."/>
            <person name="Kimberley A.M."/>
            <person name="Kershaw J.K."/>
            <person name="Kokkinaki M."/>
            <person name="Laird G.K."/>
            <person name="Lawlor S."/>
            <person name="Lee H.M."/>
            <person name="Leongamornlert D.A."/>
            <person name="Laird G."/>
            <person name="Lloyd C."/>
            <person name="Lloyd D.M."/>
            <person name="Loveland J."/>
            <person name="Lovell J."/>
            <person name="McLaren S."/>
            <person name="McLay K.E."/>
            <person name="McMurray A."/>
            <person name="Mashreghi-Mohammadi M."/>
            <person name="Matthews L."/>
            <person name="Milne S."/>
            <person name="Nickerson T."/>
            <person name="Nguyen M."/>
            <person name="Overton-Larty E."/>
            <person name="Palmer S.A."/>
            <person name="Pearce A.V."/>
            <person name="Peck A.I."/>
            <person name="Pelan S."/>
            <person name="Phillimore B."/>
            <person name="Porter K."/>
            <person name="Rice C.M."/>
            <person name="Rogosin A."/>
            <person name="Ross M.T."/>
            <person name="Sarafidou T."/>
            <person name="Sehra H.K."/>
            <person name="Shownkeen R."/>
            <person name="Skuce C.D."/>
            <person name="Smith M."/>
            <person name="Standring L."/>
            <person name="Sycamore N."/>
            <person name="Tester J."/>
            <person name="Thorpe A."/>
            <person name="Torcasso W."/>
            <person name="Tracey A."/>
            <person name="Tromans A."/>
            <person name="Tsolas J."/>
            <person name="Wall M."/>
            <person name="Walsh J."/>
            <person name="Wang H."/>
            <person name="Weinstock K."/>
            <person name="West A.P."/>
            <person name="Willey D.L."/>
            <person name="Whitehead S.L."/>
            <person name="Wilming L."/>
            <person name="Wray P.W."/>
            <person name="Young L."/>
            <person name="Chen Y."/>
            <person name="Lovering R.C."/>
            <person name="Moschonas N.K."/>
            <person name="Siebert R."/>
            <person name="Fechtel K."/>
            <person name="Bentley D."/>
            <person name="Durbin R.M."/>
            <person name="Hubbard T."/>
            <person name="Doucette-Stamm L."/>
            <person name="Beck S."/>
            <person name="Smith D.R."/>
            <person name="Rogers J."/>
        </authorList>
    </citation>
    <scope>NUCLEOTIDE SEQUENCE [LARGE SCALE GENOMIC DNA]</scope>
</reference>
<reference key="4">
    <citation type="submission" date="2005-09" db="EMBL/GenBank/DDBJ databases">
        <authorList>
            <person name="Mural R.J."/>
            <person name="Istrail S."/>
            <person name="Sutton G.G."/>
            <person name="Florea L."/>
            <person name="Halpern A.L."/>
            <person name="Mobarry C.M."/>
            <person name="Lippert R."/>
            <person name="Walenz B."/>
            <person name="Shatkay H."/>
            <person name="Dew I."/>
            <person name="Miller J.R."/>
            <person name="Flanigan M.J."/>
            <person name="Edwards N.J."/>
            <person name="Bolanos R."/>
            <person name="Fasulo D."/>
            <person name="Halldorsson B.V."/>
            <person name="Hannenhalli S."/>
            <person name="Turner R."/>
            <person name="Yooseph S."/>
            <person name="Lu F."/>
            <person name="Nusskern D.R."/>
            <person name="Shue B.C."/>
            <person name="Zheng X.H."/>
            <person name="Zhong F."/>
            <person name="Delcher A.L."/>
            <person name="Huson D.H."/>
            <person name="Kravitz S.A."/>
            <person name="Mouchard L."/>
            <person name="Reinert K."/>
            <person name="Remington K.A."/>
            <person name="Clark A.G."/>
            <person name="Waterman M.S."/>
            <person name="Eichler E.E."/>
            <person name="Adams M.D."/>
            <person name="Hunkapiller M.W."/>
            <person name="Myers E.W."/>
            <person name="Venter J.C."/>
        </authorList>
    </citation>
    <scope>NUCLEOTIDE SEQUENCE [LARGE SCALE GENOMIC DNA]</scope>
</reference>
<reference key="5">
    <citation type="journal article" date="2004" name="Genome Res.">
        <title>The status, quality, and expansion of the NIH full-length cDNA project: the Mammalian Gene Collection (MGC).</title>
        <authorList>
            <consortium name="The MGC Project Team"/>
        </authorList>
    </citation>
    <scope>NUCLEOTIDE SEQUENCE [LARGE SCALE MRNA] OF 460-598 (ISOFORM 2)</scope>
    <source>
        <tissue>Skeletal muscle</tissue>
    </source>
</reference>
<reference key="6">
    <citation type="journal article" date="2001" name="Nat. Genet.">
        <title>A novel pantothenate kinase gene (PANK2) is defective in Hallervorden-Spatz syndrome.</title>
        <authorList>
            <person name="Zhou B."/>
            <person name="Westaway S.K."/>
            <person name="Levinson B."/>
            <person name="Johnson M.A."/>
            <person name="Gitschier J."/>
            <person name="Hayflick S.J."/>
        </authorList>
    </citation>
    <scope>IDENTIFICATION (ISOFORM 2)</scope>
</reference>
<reference key="7">
    <citation type="unpublished observations" date="2001-07">
        <authorList>
            <person name="Zhou B."/>
            <person name="Westaway S.K."/>
            <person name="Levinson B."/>
            <person name="Johnson M.A."/>
            <person name="Gitschier J."/>
            <person name="Hayflick S.J."/>
        </authorList>
    </citation>
    <scope>IDENTIFICATION (ISOFORM 1)</scope>
</reference>
<reference key="8">
    <citation type="journal article" date="2009" name="Sci. Signal.">
        <title>Quantitative phosphoproteomic analysis of T cell receptor signaling reveals system-wide modulation of protein-protein interactions.</title>
        <authorList>
            <person name="Mayya V."/>
            <person name="Lundgren D.H."/>
            <person name="Hwang S.-I."/>
            <person name="Rezaul K."/>
            <person name="Wu L."/>
            <person name="Eng J.K."/>
            <person name="Rodionov V."/>
            <person name="Han D.K."/>
        </authorList>
    </citation>
    <scope>PHOSPHORYLATION [LARGE SCALE ANALYSIS] AT SER-215</scope>
    <scope>IDENTIFICATION BY MASS SPECTROMETRY [LARGE SCALE ANALYSIS]</scope>
    <source>
        <tissue>Leukemic T-cell</tissue>
    </source>
</reference>
<reference key="9">
    <citation type="journal article" date="2012" name="PLoS ONE">
        <title>Compartmentalization of mammalian pantothenate kinases.</title>
        <authorList>
            <person name="Alfonso-Pecchio A."/>
            <person name="Garcia M."/>
            <person name="Leonardi R."/>
            <person name="Jackowski S."/>
        </authorList>
    </citation>
    <scope>SUBCELLULAR LOCATION (ISOFORMS 1 AND 2)</scope>
    <scope>NUCLEAR LOCALIZATION SIGNAL</scope>
    <scope>MUTAGENESIS OF 218-LYS--ARG-233</scope>
</reference>
<reference key="10">
    <citation type="journal article" date="2007" name="J. Biol. Chem.">
        <title>Crystal structures of human pantothenate kinases. Insights into allosteric regulation and mutations linked to a neurodegeneration disorder.</title>
        <authorList>
            <person name="Hong B.S."/>
            <person name="Senisterra G."/>
            <person name="Rabeh W.M."/>
            <person name="Vedadi M."/>
            <person name="Leonardi R."/>
            <person name="Zhang Y.M."/>
            <person name="Rock C.O."/>
            <person name="Jackowski S."/>
            <person name="Park H.W."/>
        </authorList>
    </citation>
    <scope>X-RAY CRYSTALLOGRAPHY (1.9 ANGSTROMS) OF 234-593 IN COMPLEX WITH ACETYL-COA</scope>
    <scope>SUBUNIT</scope>
    <scope>ACTIVITY REGULATION</scope>
    <scope>FUNCTION (ISOFORM 1)</scope>
    <scope>CATALYTIC ACTIVITY (ISOFORM 1)</scope>
</reference>
<proteinExistence type="evidence at protein level"/>
<name>PANK1_HUMAN</name>
<gene>
    <name type="primary">PANK1</name>
    <name type="synonym">PANK</name>
</gene>
<accession>Q8TE04</accession>
<accession>A6NIP0</accession>
<accession>Q7RTX6</accession>
<accession>Q7Z495</accession>
<accession>Q8TBQ8</accession>
<dbReference type="EC" id="2.7.1.33" evidence="4 6"/>
<dbReference type="EMBL" id="AF355198">
    <property type="protein sequence ID" value="AAL86371.1"/>
    <property type="molecule type" value="mRNA"/>
</dbReference>
<dbReference type="EMBL" id="AL157400">
    <property type="status" value="NOT_ANNOTATED_CDS"/>
    <property type="molecule type" value="Genomic_DNA"/>
</dbReference>
<dbReference type="EMBL" id="AY027661">
    <property type="protein sequence ID" value="AAK20916.1"/>
    <property type="molecule type" value="mRNA"/>
</dbReference>
<dbReference type="EMBL" id="AY027662">
    <property type="protein sequence ID" value="AAK20917.1"/>
    <property type="molecule type" value="mRNA"/>
</dbReference>
<dbReference type="EMBL" id="AY027663">
    <property type="protein sequence ID" value="AAK20918.1"/>
    <property type="molecule type" value="mRNA"/>
</dbReference>
<dbReference type="EMBL" id="CH471066">
    <property type="protein sequence ID" value="EAW50131.1"/>
    <property type="molecule type" value="Genomic_DNA"/>
</dbReference>
<dbReference type="EMBL" id="BC026296">
    <property type="protein sequence ID" value="AAH26296.1"/>
    <property type="status" value="ALT_INIT"/>
    <property type="molecule type" value="mRNA"/>
</dbReference>
<dbReference type="EMBL" id="BK000008">
    <property type="protein sequence ID" value="DAA00002.1"/>
    <property type="molecule type" value="mRNA"/>
</dbReference>
<dbReference type="EMBL" id="BK000009">
    <property type="protein sequence ID" value="DAA00003.1"/>
    <property type="molecule type" value="mRNA"/>
</dbReference>
<dbReference type="CCDS" id="CCDS7405.1">
    <molecule id="Q8TE04-3"/>
</dbReference>
<dbReference type="CCDS" id="CCDS7406.1">
    <molecule id="Q8TE04-2"/>
</dbReference>
<dbReference type="RefSeq" id="NP_612189.2">
    <molecule id="Q8TE04-3"/>
    <property type="nucleotide sequence ID" value="NM_138316.3"/>
</dbReference>
<dbReference type="RefSeq" id="NP_683878.1">
    <property type="nucleotide sequence ID" value="NM_148977.2"/>
</dbReference>
<dbReference type="RefSeq" id="NP_683879.1">
    <molecule id="Q8TE04-2"/>
    <property type="nucleotide sequence ID" value="NM_148978.3"/>
</dbReference>
<dbReference type="RefSeq" id="XP_016871822.1">
    <molecule id="Q8TE04-4"/>
    <property type="nucleotide sequence ID" value="XM_017016333.3"/>
</dbReference>
<dbReference type="RefSeq" id="XP_016871827.1">
    <property type="nucleotide sequence ID" value="XM_017016338.1"/>
</dbReference>
<dbReference type="RefSeq" id="XP_054222068.1">
    <molecule id="Q8TE04-4"/>
    <property type="nucleotide sequence ID" value="XM_054366093.1"/>
</dbReference>
<dbReference type="PDB" id="2I7N">
    <property type="method" value="X-ray"/>
    <property type="resolution" value="1.90 A"/>
    <property type="chains" value="A/B=234-593"/>
</dbReference>
<dbReference type="PDB" id="3SMP">
    <property type="method" value="X-ray"/>
    <property type="resolution" value="1.90 A"/>
    <property type="chains" value="A/B=231-597"/>
</dbReference>
<dbReference type="PDBsum" id="2I7N"/>
<dbReference type="PDBsum" id="3SMP"/>
<dbReference type="SMR" id="Q8TE04"/>
<dbReference type="BioGRID" id="119751">
    <property type="interactions" value="7"/>
</dbReference>
<dbReference type="FunCoup" id="Q8TE04">
    <property type="interactions" value="3112"/>
</dbReference>
<dbReference type="IntAct" id="Q8TE04">
    <property type="interactions" value="2"/>
</dbReference>
<dbReference type="MINT" id="Q8TE04"/>
<dbReference type="STRING" id="9606.ENSP00000302108"/>
<dbReference type="BindingDB" id="Q8TE04"/>
<dbReference type="ChEMBL" id="CHEMBL3407326"/>
<dbReference type="GlyGen" id="Q8TE04">
    <property type="glycosylation" value="1 site, 1 N-linked glycan (1 site)"/>
</dbReference>
<dbReference type="iPTMnet" id="Q8TE04"/>
<dbReference type="PhosphoSitePlus" id="Q8TE04"/>
<dbReference type="BioMuta" id="PANK1"/>
<dbReference type="DMDM" id="27805665"/>
<dbReference type="jPOST" id="Q8TE04"/>
<dbReference type="MassIVE" id="Q8TE04"/>
<dbReference type="PaxDb" id="9606-ENSP00000302108"/>
<dbReference type="PeptideAtlas" id="Q8TE04"/>
<dbReference type="ProteomicsDB" id="74385">
    <molecule id="Q8TE04-1"/>
</dbReference>
<dbReference type="ProteomicsDB" id="74386">
    <molecule id="Q8TE04-2"/>
</dbReference>
<dbReference type="ProteomicsDB" id="74387">
    <molecule id="Q8TE04-3"/>
</dbReference>
<dbReference type="ProteomicsDB" id="74388">
    <molecule id="Q8TE04-4"/>
</dbReference>
<dbReference type="Pumba" id="Q8TE04"/>
<dbReference type="Antibodypedia" id="35332">
    <property type="antibodies" value="236 antibodies from 27 providers"/>
</dbReference>
<dbReference type="DNASU" id="53354"/>
<dbReference type="Ensembl" id="ENST00000322191.10">
    <molecule id="Q8TE04-3"/>
    <property type="protein sequence ID" value="ENSP00000318526.6"/>
    <property type="gene ID" value="ENSG00000152782.19"/>
</dbReference>
<dbReference type="Ensembl" id="ENST00000342512.4">
    <molecule id="Q8TE04-2"/>
    <property type="protein sequence ID" value="ENSP00000345118.3"/>
    <property type="gene ID" value="ENSG00000152782.19"/>
</dbReference>
<dbReference type="GeneID" id="53354"/>
<dbReference type="KEGG" id="hsa:53354"/>
<dbReference type="UCSC" id="uc001kgn.3">
    <molecule id="Q8TE04-1"/>
    <property type="organism name" value="human"/>
</dbReference>
<dbReference type="AGR" id="HGNC:8598"/>
<dbReference type="CTD" id="53354"/>
<dbReference type="DisGeNET" id="53354"/>
<dbReference type="GeneCards" id="PANK1"/>
<dbReference type="HGNC" id="HGNC:8598">
    <property type="gene designation" value="PANK1"/>
</dbReference>
<dbReference type="HPA" id="ENSG00000152782">
    <property type="expression patterns" value="Tissue enhanced (kidney, liver)"/>
</dbReference>
<dbReference type="MIM" id="606160">
    <property type="type" value="gene"/>
</dbReference>
<dbReference type="neXtProt" id="NX_Q8TE04"/>
<dbReference type="OpenTargets" id="ENSG00000152782"/>
<dbReference type="PharmGKB" id="PA32928"/>
<dbReference type="VEuPathDB" id="HostDB:ENSG00000152782"/>
<dbReference type="eggNOG" id="KOG2201">
    <property type="taxonomic scope" value="Eukaryota"/>
</dbReference>
<dbReference type="GeneTree" id="ENSGT00940000157373"/>
<dbReference type="HOGENOM" id="CLU_011154_4_1_1"/>
<dbReference type="InParanoid" id="Q8TE04"/>
<dbReference type="OMA" id="FPSCALH"/>
<dbReference type="OrthoDB" id="275583at2759"/>
<dbReference type="PAN-GO" id="Q8TE04">
    <property type="GO annotations" value="4 GO annotations based on evolutionary models"/>
</dbReference>
<dbReference type="PhylomeDB" id="Q8TE04"/>
<dbReference type="TreeFam" id="TF314866"/>
<dbReference type="BioCyc" id="MetaCyc:HS07852-MONOMER"/>
<dbReference type="BRENDA" id="2.7.1.33">
    <property type="organism ID" value="2681"/>
</dbReference>
<dbReference type="PathwayCommons" id="Q8TE04"/>
<dbReference type="Reactome" id="R-HSA-196783">
    <property type="pathway name" value="Coenzyme A biosynthesis"/>
</dbReference>
<dbReference type="SignaLink" id="Q8TE04"/>
<dbReference type="UniPathway" id="UPA00241">
    <property type="reaction ID" value="UER00352"/>
</dbReference>
<dbReference type="BioGRID-ORCS" id="53354">
    <property type="hits" value="20 hits in 1158 CRISPR screens"/>
</dbReference>
<dbReference type="ChiTaRS" id="PANK1">
    <property type="organism name" value="human"/>
</dbReference>
<dbReference type="EvolutionaryTrace" id="Q8TE04"/>
<dbReference type="GeneWiki" id="PANK1"/>
<dbReference type="GenomeRNAi" id="53354"/>
<dbReference type="Pharos" id="Q8TE04">
    <property type="development level" value="Tbio"/>
</dbReference>
<dbReference type="PRO" id="PR:Q8TE04"/>
<dbReference type="Proteomes" id="UP000005640">
    <property type="component" value="Chromosome 10"/>
</dbReference>
<dbReference type="RNAct" id="Q8TE04">
    <property type="molecule type" value="protein"/>
</dbReference>
<dbReference type="Bgee" id="ENSG00000152782">
    <property type="expression patterns" value="Expressed in kidney epithelium and 169 other cell types or tissues"/>
</dbReference>
<dbReference type="GO" id="GO:0030136">
    <property type="term" value="C:clathrin-coated vesicle"/>
    <property type="evidence" value="ECO:0007669"/>
    <property type="project" value="UniProtKB-SubCell"/>
</dbReference>
<dbReference type="GO" id="GO:0005737">
    <property type="term" value="C:cytoplasm"/>
    <property type="evidence" value="ECO:0000314"/>
    <property type="project" value="UniProtKB"/>
</dbReference>
<dbReference type="GO" id="GO:0005829">
    <property type="term" value="C:cytosol"/>
    <property type="evidence" value="ECO:0000314"/>
    <property type="project" value="UniProtKB"/>
</dbReference>
<dbReference type="GO" id="GO:0005730">
    <property type="term" value="C:nucleolus"/>
    <property type="evidence" value="ECO:0007669"/>
    <property type="project" value="UniProtKB-SubCell"/>
</dbReference>
<dbReference type="GO" id="GO:0005634">
    <property type="term" value="C:nucleus"/>
    <property type="evidence" value="ECO:0000314"/>
    <property type="project" value="UniProtKB"/>
</dbReference>
<dbReference type="GO" id="GO:0055037">
    <property type="term" value="C:recycling endosome"/>
    <property type="evidence" value="ECO:0007669"/>
    <property type="project" value="UniProtKB-SubCell"/>
</dbReference>
<dbReference type="GO" id="GO:1905502">
    <property type="term" value="F:acetyl-CoA binding"/>
    <property type="evidence" value="ECO:0000314"/>
    <property type="project" value="UniProtKB"/>
</dbReference>
<dbReference type="GO" id="GO:0005524">
    <property type="term" value="F:ATP binding"/>
    <property type="evidence" value="ECO:0007669"/>
    <property type="project" value="UniProtKB-KW"/>
</dbReference>
<dbReference type="GO" id="GO:0004594">
    <property type="term" value="F:pantothenate kinase activity"/>
    <property type="evidence" value="ECO:0000314"/>
    <property type="project" value="UniProtKB"/>
</dbReference>
<dbReference type="GO" id="GO:0042803">
    <property type="term" value="F:protein homodimerization activity"/>
    <property type="evidence" value="ECO:0000314"/>
    <property type="project" value="UniProtKB"/>
</dbReference>
<dbReference type="GO" id="GO:0015937">
    <property type="term" value="P:coenzyme A biosynthetic process"/>
    <property type="evidence" value="ECO:0000318"/>
    <property type="project" value="GO_Central"/>
</dbReference>
<dbReference type="CDD" id="cd24135">
    <property type="entry name" value="ASKHA_NBD_PanK-II_Pank1"/>
    <property type="match status" value="1"/>
</dbReference>
<dbReference type="FunFam" id="3.30.420.40:FF:000244">
    <property type="entry name" value="pantothenate kinase 1-like isoform X3"/>
    <property type="match status" value="1"/>
</dbReference>
<dbReference type="FunFam" id="3.30.420.510:FF:000001">
    <property type="entry name" value="pantothenate kinase 2, mitochondrial"/>
    <property type="match status" value="1"/>
</dbReference>
<dbReference type="FunFam" id="3.30.420.40:FF:000392">
    <property type="entry name" value="pantothenate kinase 3-like isoform X1"/>
    <property type="match status" value="1"/>
</dbReference>
<dbReference type="Gene3D" id="3.30.420.40">
    <property type="match status" value="1"/>
</dbReference>
<dbReference type="Gene3D" id="3.30.420.510">
    <property type="match status" value="1"/>
</dbReference>
<dbReference type="InterPro" id="IPR043129">
    <property type="entry name" value="ATPase_NBD"/>
</dbReference>
<dbReference type="InterPro" id="IPR004567">
    <property type="entry name" value="Type_II_PanK"/>
</dbReference>
<dbReference type="NCBIfam" id="TIGR00555">
    <property type="entry name" value="panK_eukar"/>
    <property type="match status" value="1"/>
</dbReference>
<dbReference type="PANTHER" id="PTHR12280">
    <property type="entry name" value="PANTOTHENATE KINASE"/>
    <property type="match status" value="1"/>
</dbReference>
<dbReference type="PANTHER" id="PTHR12280:SF23">
    <property type="entry name" value="PANTOTHENATE KINASE 1"/>
    <property type="match status" value="1"/>
</dbReference>
<dbReference type="Pfam" id="PF03630">
    <property type="entry name" value="Fumble"/>
    <property type="match status" value="1"/>
</dbReference>
<dbReference type="SUPFAM" id="SSF53067">
    <property type="entry name" value="Actin-like ATPase domain"/>
    <property type="match status" value="2"/>
</dbReference>
<comment type="function">
    <molecule>Isoform 1</molecule>
    <text evidence="5 6">Catalyzes the phosphorylation of pantothenate to generate 4'-phosphopantothenate in the first and rate-determining step of coenzyme A (CoA) synthesis.</text>
</comment>
<comment type="catalytic activity">
    <reaction evidence="5 6">
        <text>(R)-pantothenate + ATP = (R)-4'-phosphopantothenate + ADP + H(+)</text>
        <dbReference type="Rhea" id="RHEA:16373"/>
        <dbReference type="ChEBI" id="CHEBI:10986"/>
        <dbReference type="ChEBI" id="CHEBI:15378"/>
        <dbReference type="ChEBI" id="CHEBI:29032"/>
        <dbReference type="ChEBI" id="CHEBI:30616"/>
        <dbReference type="ChEBI" id="CHEBI:456216"/>
        <dbReference type="EC" id="2.7.1.33"/>
    </reaction>
</comment>
<comment type="activity regulation">
    <text evidence="6">Regulated by feedback inhibition by CoA and its thioesters.</text>
</comment>
<comment type="pathway">
    <text evidence="5 6">Cofactor biosynthesis; coenzyme A biosynthesis; CoA from (R)-pantothenate: step 1/5.</text>
</comment>
<comment type="subunit">
    <text evidence="6">Homodimer.</text>
</comment>
<comment type="subcellular location">
    <subcellularLocation>
        <location evidence="5">Cytoplasm</location>
    </subcellularLocation>
</comment>
<comment type="subcellular location">
    <molecule>Isoform 1</molecule>
    <subcellularLocation>
        <location evidence="7">Nucleus</location>
    </subcellularLocation>
    <subcellularLocation>
        <location evidence="7">Nucleus</location>
        <location evidence="7">Nucleolus</location>
    </subcellularLocation>
</comment>
<comment type="subcellular location">
    <molecule>Isoform 2</molecule>
    <subcellularLocation>
        <location evidence="7">Cytoplasm</location>
        <location evidence="7">Cytosol</location>
    </subcellularLocation>
    <subcellularLocation>
        <location evidence="7">Cytoplasmic vesicle</location>
        <location evidence="7">Clathrin-coated vesicle</location>
    </subcellularLocation>
    <subcellularLocation>
        <location evidence="7">Recycling endosome</location>
    </subcellularLocation>
</comment>
<comment type="alternative products">
    <event type="alternative splicing"/>
    <isoform>
        <id>Q8TE04-1</id>
        <name>1</name>
        <name>PanK1-alpha</name>
        <name>PANK1a</name>
        <sequence type="displayed"/>
    </isoform>
    <isoform>
        <id>Q8TE04-2</id>
        <name>2</name>
        <name>PANK1a</name>
        <name>PanK1-beta</name>
        <sequence type="described" ref="VSP_004520"/>
    </isoform>
    <isoform>
        <id>Q8TE04-3</id>
        <name>3</name>
        <name>PANK1b</name>
        <sequence type="described" ref="VSP_004520 VSP_004521"/>
    </isoform>
    <isoform>
        <id>Q8TE04-4</id>
        <name>4</name>
        <name>PanK1-gamma</name>
        <sequence type="described" ref="VSP_012823 VSP_012824"/>
    </isoform>
</comment>
<comment type="tissue specificity">
    <molecule>Isoform 1</molecule>
    <text evidence="4 5">Expressed at high levels in brain, heart, kidney, liver, skeletal muscle and testis.</text>
</comment>
<comment type="tissue specificity">
    <molecule>Isoform 2</molecule>
    <text evidence="5">Detected at much lower levels in kidney, liver, brain and testis and not detected in heart or skeletal muscle.</text>
</comment>
<comment type="induction">
    <molecule>Isoform 1</molecule>
    <text evidence="5">Induced by bezafibrate, a hypolipidemic drug which acts as an agonist of peroxisome proliferator activator receptor alpha (PPARA), while isoform 2 levels decrease slightly.</text>
</comment>
<comment type="domain">
    <molecule>Isoform 1</molecule>
    <text evidence="1">The N-terminal extension, may be the regulatory domain.</text>
</comment>
<comment type="similarity">
    <text evidence="11">Belongs to the type II pantothenate kinase family.</text>
</comment>
<comment type="sequence caution" evidence="11">
    <conflict type="erroneous initiation">
        <sequence resource="EMBL-CDS" id="AAH26296"/>
    </conflict>
</comment>
<protein>
    <recommendedName>
        <fullName>Pantothenate kinase 1</fullName>
        <shortName>hPanK</shortName>
        <shortName>hPanK1</shortName>
        <ecNumber evidence="4 6">2.7.1.33</ecNumber>
    </recommendedName>
    <alternativeName>
        <fullName>Pantothenic acid kinase 1</fullName>
    </alternativeName>
</protein>